<protein>
    <recommendedName>
        <fullName>Uncharacterized mitochondrial protein ORF4A/ORF4B</fullName>
    </recommendedName>
</protein>
<proteinExistence type="predicted"/>
<reference key="1">
    <citation type="journal article" date="1989" name="Mol. Gen. Genet.">
        <title>In organello replication and viral affinity of linear, extrachromosomal DNA of the ascomycete Ascobolus immersus.</title>
        <authorList>
            <person name="Kempken F."/>
            <person name="Meinhardt F."/>
            <person name="Esser K."/>
        </authorList>
    </citation>
    <scope>NUCLEOTIDE SEQUENCE [GENOMIC DNA]</scope>
    <source>
        <strain>2/I</strain>
    </source>
</reference>
<organism>
    <name type="scientific">Ascobolus immersus</name>
    <dbReference type="NCBI Taxonomy" id="5191"/>
    <lineage>
        <taxon>Eukaryota</taxon>
        <taxon>Fungi</taxon>
        <taxon>Dikarya</taxon>
        <taxon>Ascomycota</taxon>
        <taxon>Pezizomycotina</taxon>
        <taxon>Pezizomycetes</taxon>
        <taxon>Pezizales</taxon>
        <taxon>Ascobolaceae</taxon>
        <taxon>Ascobolus</taxon>
    </lineage>
</organism>
<keyword id="KW-0496">Mitochondrion</keyword>
<keyword id="KW-0614">Plasmid</keyword>
<evidence type="ECO:0000305" key="1"/>
<sequence>VGVRSYYMKYIIVGFTLPRPHNPPAFILSFRPKRINTGSYPPIQNCKFLIADGSRKVFT</sequence>
<name>YPA4_ASCIM</name>
<feature type="chain" id="PRO_0000196888" description="Uncharacterized mitochondrial protein ORF4A/ORF4B">
    <location>
        <begin position="1"/>
        <end position="59"/>
    </location>
</feature>
<accession>P22377</accession>
<comment type="subcellular location">
    <subcellularLocation>
        <location evidence="1">Mitochondrion</location>
    </subcellularLocation>
</comment>
<geneLocation type="mitochondrion"/>
<geneLocation type="plasmid">
    <name>pAI2</name>
</geneLocation>
<dbReference type="EMBL" id="X15982">
    <property type="protein sequence ID" value="CAA34109.1"/>
    <property type="molecule type" value="Genomic_DNA"/>
</dbReference>
<dbReference type="EMBL" id="X15982">
    <property type="protein sequence ID" value="CAA34105.1"/>
    <property type="molecule type" value="Genomic_DNA"/>
</dbReference>
<dbReference type="PIR" id="S05363">
    <property type="entry name" value="S05363"/>
</dbReference>
<dbReference type="GO" id="GO:0005739">
    <property type="term" value="C:mitochondrion"/>
    <property type="evidence" value="ECO:0007669"/>
    <property type="project" value="UniProtKB-SubCell"/>
</dbReference>